<proteinExistence type="inferred from homology"/>
<keyword id="KW-0963">Cytoplasm</keyword>
<keyword id="KW-0378">Hydrolase</keyword>
<keyword id="KW-0479">Metal-binding</keyword>
<keyword id="KW-0547">Nucleotide-binding</keyword>
<evidence type="ECO:0000255" key="1">
    <source>
        <dbReference type="HAMAP-Rule" id="MF_00060"/>
    </source>
</evidence>
<sequence length="255" mass="27505">MNILIANDDGVFAPGIQALADALKPLGRVVVVAPESERSGFSSALTLDRPLRPIQIAEDVWAVNGTPADCVYLSMNGLFDFEFDLVVSGINRGANLGDDVLYSGTVGAAFEGRLMKQPAIAVSLAGPDVRSYDHKDDYAQAAKWVHDFITKGLPALPPRHIFNINIPDVPQLKGTQITYQGRRAQSKPITSHVDPRGRQVYWIGLAGEAVTDPQRIASQIQSDFFAVANGFVSVTPIQMDATNYAVLEDLQASLG</sequence>
<organism>
    <name type="scientific">Acinetobacter baumannii (strain SDF)</name>
    <dbReference type="NCBI Taxonomy" id="509170"/>
    <lineage>
        <taxon>Bacteria</taxon>
        <taxon>Pseudomonadati</taxon>
        <taxon>Pseudomonadota</taxon>
        <taxon>Gammaproteobacteria</taxon>
        <taxon>Moraxellales</taxon>
        <taxon>Moraxellaceae</taxon>
        <taxon>Acinetobacter</taxon>
        <taxon>Acinetobacter calcoaceticus/baumannii complex</taxon>
    </lineage>
</organism>
<dbReference type="EC" id="3.1.3.5" evidence="1"/>
<dbReference type="EMBL" id="CU468230">
    <property type="protein sequence ID" value="CAP00480.1"/>
    <property type="molecule type" value="Genomic_DNA"/>
</dbReference>
<dbReference type="SMR" id="B0VUE2"/>
<dbReference type="KEGG" id="abm:ABSDF1130"/>
<dbReference type="HOGENOM" id="CLU_045192_1_2_6"/>
<dbReference type="Proteomes" id="UP000001741">
    <property type="component" value="Chromosome"/>
</dbReference>
<dbReference type="GO" id="GO:0005737">
    <property type="term" value="C:cytoplasm"/>
    <property type="evidence" value="ECO:0007669"/>
    <property type="project" value="UniProtKB-SubCell"/>
</dbReference>
<dbReference type="GO" id="GO:0008254">
    <property type="term" value="F:3'-nucleotidase activity"/>
    <property type="evidence" value="ECO:0007669"/>
    <property type="project" value="TreeGrafter"/>
</dbReference>
<dbReference type="GO" id="GO:0008253">
    <property type="term" value="F:5'-nucleotidase activity"/>
    <property type="evidence" value="ECO:0007669"/>
    <property type="project" value="UniProtKB-UniRule"/>
</dbReference>
<dbReference type="GO" id="GO:0004309">
    <property type="term" value="F:exopolyphosphatase activity"/>
    <property type="evidence" value="ECO:0007669"/>
    <property type="project" value="TreeGrafter"/>
</dbReference>
<dbReference type="GO" id="GO:0046872">
    <property type="term" value="F:metal ion binding"/>
    <property type="evidence" value="ECO:0007669"/>
    <property type="project" value="UniProtKB-UniRule"/>
</dbReference>
<dbReference type="GO" id="GO:0000166">
    <property type="term" value="F:nucleotide binding"/>
    <property type="evidence" value="ECO:0007669"/>
    <property type="project" value="UniProtKB-KW"/>
</dbReference>
<dbReference type="FunFam" id="3.40.1210.10:FF:000001">
    <property type="entry name" value="5'/3'-nucleotidase SurE"/>
    <property type="match status" value="1"/>
</dbReference>
<dbReference type="Gene3D" id="3.40.1210.10">
    <property type="entry name" value="Survival protein SurE-like phosphatase/nucleotidase"/>
    <property type="match status" value="1"/>
</dbReference>
<dbReference type="HAMAP" id="MF_00060">
    <property type="entry name" value="SurE"/>
    <property type="match status" value="1"/>
</dbReference>
<dbReference type="InterPro" id="IPR030048">
    <property type="entry name" value="SurE"/>
</dbReference>
<dbReference type="InterPro" id="IPR002828">
    <property type="entry name" value="SurE-like_Pase/nucleotidase"/>
</dbReference>
<dbReference type="InterPro" id="IPR036523">
    <property type="entry name" value="SurE-like_sf"/>
</dbReference>
<dbReference type="NCBIfam" id="NF001490">
    <property type="entry name" value="PRK00346.1-4"/>
    <property type="match status" value="1"/>
</dbReference>
<dbReference type="NCBIfam" id="TIGR00087">
    <property type="entry name" value="surE"/>
    <property type="match status" value="1"/>
</dbReference>
<dbReference type="PANTHER" id="PTHR30457">
    <property type="entry name" value="5'-NUCLEOTIDASE SURE"/>
    <property type="match status" value="1"/>
</dbReference>
<dbReference type="PANTHER" id="PTHR30457:SF12">
    <property type="entry name" value="5'_3'-NUCLEOTIDASE SURE"/>
    <property type="match status" value="1"/>
</dbReference>
<dbReference type="Pfam" id="PF01975">
    <property type="entry name" value="SurE"/>
    <property type="match status" value="1"/>
</dbReference>
<dbReference type="SUPFAM" id="SSF64167">
    <property type="entry name" value="SurE-like"/>
    <property type="match status" value="1"/>
</dbReference>
<reference key="1">
    <citation type="journal article" date="2008" name="PLoS ONE">
        <title>Comparative analysis of Acinetobacters: three genomes for three lifestyles.</title>
        <authorList>
            <person name="Vallenet D."/>
            <person name="Nordmann P."/>
            <person name="Barbe V."/>
            <person name="Poirel L."/>
            <person name="Mangenot S."/>
            <person name="Bataille E."/>
            <person name="Dossat C."/>
            <person name="Gas S."/>
            <person name="Kreimeyer A."/>
            <person name="Lenoble P."/>
            <person name="Oztas S."/>
            <person name="Poulain J."/>
            <person name="Segurens B."/>
            <person name="Robert C."/>
            <person name="Abergel C."/>
            <person name="Claverie J.-M."/>
            <person name="Raoult D."/>
            <person name="Medigue C."/>
            <person name="Weissenbach J."/>
            <person name="Cruveiller S."/>
        </authorList>
    </citation>
    <scope>NUCLEOTIDE SEQUENCE [LARGE SCALE GENOMIC DNA]</scope>
    <source>
        <strain>SDF</strain>
    </source>
</reference>
<comment type="function">
    <text evidence="1">Nucleotidase that shows phosphatase activity on nucleoside 5'-monophosphates.</text>
</comment>
<comment type="catalytic activity">
    <reaction evidence="1">
        <text>a ribonucleoside 5'-phosphate + H2O = a ribonucleoside + phosphate</text>
        <dbReference type="Rhea" id="RHEA:12484"/>
        <dbReference type="ChEBI" id="CHEBI:15377"/>
        <dbReference type="ChEBI" id="CHEBI:18254"/>
        <dbReference type="ChEBI" id="CHEBI:43474"/>
        <dbReference type="ChEBI" id="CHEBI:58043"/>
        <dbReference type="EC" id="3.1.3.5"/>
    </reaction>
</comment>
<comment type="cofactor">
    <cofactor evidence="1">
        <name>a divalent metal cation</name>
        <dbReference type="ChEBI" id="CHEBI:60240"/>
    </cofactor>
    <text evidence="1">Binds 1 divalent metal cation per subunit.</text>
</comment>
<comment type="subcellular location">
    <subcellularLocation>
        <location evidence="1">Cytoplasm</location>
    </subcellularLocation>
</comment>
<comment type="similarity">
    <text evidence="1">Belongs to the SurE nucleotidase family.</text>
</comment>
<feature type="chain" id="PRO_1000091979" description="5'-nucleotidase SurE">
    <location>
        <begin position="1"/>
        <end position="255"/>
    </location>
</feature>
<feature type="binding site" evidence="1">
    <location>
        <position position="8"/>
    </location>
    <ligand>
        <name>a divalent metal cation</name>
        <dbReference type="ChEBI" id="CHEBI:60240"/>
    </ligand>
</feature>
<feature type="binding site" evidence="1">
    <location>
        <position position="9"/>
    </location>
    <ligand>
        <name>a divalent metal cation</name>
        <dbReference type="ChEBI" id="CHEBI:60240"/>
    </ligand>
</feature>
<feature type="binding site" evidence="1">
    <location>
        <position position="39"/>
    </location>
    <ligand>
        <name>a divalent metal cation</name>
        <dbReference type="ChEBI" id="CHEBI:60240"/>
    </ligand>
</feature>
<feature type="binding site" evidence="1">
    <location>
        <position position="91"/>
    </location>
    <ligand>
        <name>a divalent metal cation</name>
        <dbReference type="ChEBI" id="CHEBI:60240"/>
    </ligand>
</feature>
<name>SURE_ACIBS</name>
<gene>
    <name evidence="1" type="primary">surE</name>
    <name type="ordered locus">ABSDF1130</name>
</gene>
<protein>
    <recommendedName>
        <fullName evidence="1">5'-nucleotidase SurE</fullName>
        <ecNumber evidence="1">3.1.3.5</ecNumber>
    </recommendedName>
    <alternativeName>
        <fullName evidence="1">Nucleoside 5'-monophosphate phosphohydrolase</fullName>
    </alternativeName>
</protein>
<accession>B0VUE2</accession>